<organism>
    <name type="scientific">Streptococcus sanguinis</name>
    <dbReference type="NCBI Taxonomy" id="1305"/>
    <lineage>
        <taxon>Bacteria</taxon>
        <taxon>Bacillati</taxon>
        <taxon>Bacillota</taxon>
        <taxon>Bacilli</taxon>
        <taxon>Lactobacillales</taxon>
        <taxon>Streptococcaceae</taxon>
        <taxon>Streptococcus</taxon>
    </lineage>
</organism>
<gene>
    <name type="primary">iga</name>
</gene>
<comment type="function">
    <text evidence="6">Zinc metalloproteinase which cleaves human immunoglobulin A1 (IgA1) in the hinge region.</text>
</comment>
<comment type="catalytic activity">
    <reaction>
        <text>Cleavage of Pro-|-Thr bond in the hinge region of the heavy chain of human IgA.</text>
        <dbReference type="EC" id="3.4.24.13"/>
    </reaction>
</comment>
<comment type="cofactor">
    <cofactor evidence="1">
        <name>Zn(2+)</name>
        <dbReference type="ChEBI" id="CHEBI:29105"/>
    </cofactor>
    <text evidence="1">Binds 1 zinc ion per subunit.</text>
</comment>
<comment type="activity regulation">
    <text>Inhibited by EDTA.</text>
</comment>
<comment type="subcellular location">
    <subcellularLocation>
        <location evidence="4">Secreted</location>
        <location evidence="4">Cell wall</location>
    </subcellularLocation>
    <subcellularLocation>
        <location evidence="1">Membrane</location>
        <topology evidence="1">Multi-pass membrane protein</topology>
    </subcellularLocation>
    <subcellularLocation>
        <location evidence="4">Secreted</location>
        <location evidence="4">Cell wall</location>
        <topology evidence="4">Peptidoglycan-anchor</topology>
    </subcellularLocation>
</comment>
<comment type="PTM">
    <text evidence="1">The Gram-positive cell-wall anchor motif LPXTG is located in the N-terminal part, in contrast to such motifs in other known streptococcal and staphylococcal proteins. The protease could be cleaved by the sortase and anchored in the membrane via the two potential N-terminal transmembrane domains, whereas the propeptide located prior to the LPXTG motif would remain attached to the cell wall peptidoglycan by an amide bond (By similarity).</text>
</comment>
<comment type="similarity">
    <text evidence="7">Belongs to the peptidase M26 family.</text>
</comment>
<comment type="sequence caution" evidence="7">
    <conflict type="frameshift">
        <sequence resource="EMBL-CDS" id="AAA26901"/>
    </conflict>
</comment>
<dbReference type="EC" id="3.4.24.13"/>
<dbReference type="EMBL" id="L29504">
    <property type="protein sequence ID" value="AAA26901.1"/>
    <property type="status" value="ALT_FRAME"/>
    <property type="molecule type" value="Genomic_DNA"/>
</dbReference>
<dbReference type="PIR" id="A60272">
    <property type="entry name" value="A60272"/>
</dbReference>
<dbReference type="PIR" id="B60272">
    <property type="entry name" value="B60272"/>
</dbReference>
<dbReference type="SMR" id="Q59986"/>
<dbReference type="MEROPS" id="M26.001"/>
<dbReference type="BRENDA" id="3.4.24.13">
    <property type="organism ID" value="5953"/>
</dbReference>
<dbReference type="GO" id="GO:0005576">
    <property type="term" value="C:extracellular region"/>
    <property type="evidence" value="ECO:0007669"/>
    <property type="project" value="UniProtKB-KW"/>
</dbReference>
<dbReference type="GO" id="GO:0016020">
    <property type="term" value="C:membrane"/>
    <property type="evidence" value="ECO:0007669"/>
    <property type="project" value="UniProtKB-SubCell"/>
</dbReference>
<dbReference type="GO" id="GO:0004222">
    <property type="term" value="F:metalloendopeptidase activity"/>
    <property type="evidence" value="ECO:0007669"/>
    <property type="project" value="InterPro"/>
</dbReference>
<dbReference type="GO" id="GO:0008270">
    <property type="term" value="F:zinc ion binding"/>
    <property type="evidence" value="ECO:0007669"/>
    <property type="project" value="InterPro"/>
</dbReference>
<dbReference type="GO" id="GO:0006508">
    <property type="term" value="P:proteolysis"/>
    <property type="evidence" value="ECO:0007669"/>
    <property type="project" value="UniProtKB-KW"/>
</dbReference>
<dbReference type="Gene3D" id="2.160.20.110">
    <property type="match status" value="1"/>
</dbReference>
<dbReference type="Gene3D" id="2.20.230.10">
    <property type="entry name" value="Resuscitation-promoting factor rpfb"/>
    <property type="match status" value="1"/>
</dbReference>
<dbReference type="InterPro" id="IPR011098">
    <property type="entry name" value="G5_dom"/>
</dbReference>
<dbReference type="InterPro" id="IPR011493">
    <property type="entry name" value="GLUG"/>
</dbReference>
<dbReference type="InterPro" id="IPR019931">
    <property type="entry name" value="LPXTG_anchor"/>
</dbReference>
<dbReference type="InterPro" id="IPR011505">
    <property type="entry name" value="Peptidase_M26_C_dom"/>
</dbReference>
<dbReference type="InterPro" id="IPR008006">
    <property type="entry name" value="Peptidase_M26_N_dom"/>
</dbReference>
<dbReference type="InterPro" id="IPR005877">
    <property type="entry name" value="YSIRK_signal_dom"/>
</dbReference>
<dbReference type="NCBIfam" id="TIGR01167">
    <property type="entry name" value="LPXTG_anchor"/>
    <property type="match status" value="1"/>
</dbReference>
<dbReference type="NCBIfam" id="TIGR01168">
    <property type="entry name" value="YSIRK_signal"/>
    <property type="match status" value="1"/>
</dbReference>
<dbReference type="Pfam" id="PF07501">
    <property type="entry name" value="G5"/>
    <property type="match status" value="1"/>
</dbReference>
<dbReference type="Pfam" id="PF07581">
    <property type="entry name" value="Glug"/>
    <property type="match status" value="1"/>
</dbReference>
<dbReference type="Pfam" id="PF00746">
    <property type="entry name" value="Gram_pos_anchor"/>
    <property type="match status" value="1"/>
</dbReference>
<dbReference type="Pfam" id="PF07580">
    <property type="entry name" value="Peptidase_M26_C"/>
    <property type="match status" value="1"/>
</dbReference>
<dbReference type="Pfam" id="PF05342">
    <property type="entry name" value="Peptidase_M26_N"/>
    <property type="match status" value="1"/>
</dbReference>
<dbReference type="Pfam" id="PF04650">
    <property type="entry name" value="YSIRK_signal"/>
    <property type="match status" value="1"/>
</dbReference>
<dbReference type="SMART" id="SM01208">
    <property type="entry name" value="G5"/>
    <property type="match status" value="1"/>
</dbReference>
<dbReference type="PROSITE" id="PS51109">
    <property type="entry name" value="G5"/>
    <property type="match status" value="1"/>
</dbReference>
<dbReference type="PROSITE" id="PS50847">
    <property type="entry name" value="GRAM_POS_ANCHORING"/>
    <property type="match status" value="1"/>
</dbReference>
<dbReference type="PROSITE" id="PS00142">
    <property type="entry name" value="ZINC_PROTEASE"/>
    <property type="match status" value="1"/>
</dbReference>
<name>IGA1_STRSA</name>
<reference key="1">
    <citation type="journal article" date="1991" name="Infect. Immun.">
        <title>Analysis of the immunoglobulin A protease gene of Streptococcus sanguis.</title>
        <authorList>
            <person name="Gilbert J.V."/>
            <person name="Plaut A.G."/>
            <person name="Wright A."/>
        </authorList>
    </citation>
    <scope>NUCLEOTIDE SEQUENCE [GENOMIC DNA]</scope>
    <scope>PROTEIN SEQUENCE OF 211-219</scope>
    <scope>FUNCTION</scope>
    <scope>MUTAGENESIS OF HIS-1494 AND GLU-1495</scope>
    <source>
        <strain>ATCC 10556 / DSM 20567 / JCM 5708 / LMG 14702 / NCIMB 702064 / NCTC 7863</strain>
    </source>
</reference>
<evidence type="ECO:0000250" key="1"/>
<evidence type="ECO:0000255" key="2"/>
<evidence type="ECO:0000255" key="3">
    <source>
        <dbReference type="PROSITE-ProRule" id="PRU00437"/>
    </source>
</evidence>
<evidence type="ECO:0000255" key="4">
    <source>
        <dbReference type="PROSITE-ProRule" id="PRU00477"/>
    </source>
</evidence>
<evidence type="ECO:0000256" key="5">
    <source>
        <dbReference type="SAM" id="MobiDB-lite"/>
    </source>
</evidence>
<evidence type="ECO:0000269" key="6">
    <source>
    </source>
</evidence>
<evidence type="ECO:0000305" key="7"/>
<protein>
    <recommendedName>
        <fullName>Immunoglobulin A1 protease</fullName>
        <shortName>IgA1 protease</shortName>
        <ecNumber>3.4.24.13</ecNumber>
    </recommendedName>
    <alternativeName>
        <fullName>IgA-specific zinc metalloproteinase</fullName>
    </alternativeName>
</protein>
<keyword id="KW-0134">Cell wall</keyword>
<keyword id="KW-0903">Direct protein sequencing</keyword>
<keyword id="KW-0378">Hydrolase</keyword>
<keyword id="KW-0472">Membrane</keyword>
<keyword id="KW-0479">Metal-binding</keyword>
<keyword id="KW-0482">Metalloprotease</keyword>
<keyword id="KW-0572">Peptidoglycan-anchor</keyword>
<keyword id="KW-0645">Protease</keyword>
<keyword id="KW-0677">Repeat</keyword>
<keyword id="KW-0964">Secreted</keyword>
<keyword id="KW-0732">Signal</keyword>
<keyword id="KW-0812">Transmembrane</keyword>
<keyword id="KW-1133">Transmembrane helix</keyword>
<keyword id="KW-0862">Zinc</keyword>
<sequence>MKKFLGEKQTRFAFRKLAVGLVSAAISSLFFVSIVGVDSVQAQEKLNVHYKYVTDTEITPQEKELIVSGVPRMPEGNEETYYLVYRLNSNAGAKTLPNTGDNNSNTMMAAGLLLTTIGLVVFAVSKRKVQSKFLLTVLVGASVGGGLILSVDALENGSLLQYNAEYQVSAGESLPSPGEISGYTYVGYIKDESIKKLLDNKIPDNQQNANVDKEALNQNKKLDYSVSFDKNGLKNQTVGVNTIEPQDEVLSGRVAKPELLYKETSIETEIAYGEQIQENPDLAEGTVRVKQEGKPGRKIEVVRIFTVDNAEVSREVLSTKIEEATPKIVEKGTKKLEAPSEKPVTSNLVQPEQVAPLPEYTGVQSGAIVEPEQVASLPEYSGTLSGAIVEPEQIEPEIGGVQSGAIVEPEQVTPLPEYTGTQAGAVVSPEQVAPLPEYTGTQSGAIVEPAQVTPLPEYTGVQSGAIVKPAQVTPLPEYTGTQSGAIVEPEQVTPSPEYTGVQAGAIVEPEQVASLPEYTGSQAGAIVEPEQVEPPQEYTGNIEPAAPEAENPTEKAQEPKEQKQEPEKNIELRNVSDVELYSLADGKYKQHVSLDAIPSNQENYFVKVKSSKFKDVFLPISSIVDSTKDGQPVYKITASAEKLKQDVNNKYEDNFTFYLAKKAEREVTNFTSFSNLVQAINNNLNGTYYLAASLNANEVELENGASSYIKGRFTGKLFGSKDGKNYAIYNLKKPLFDTLSAATVENLTLKDVNISGKTDIGALANEANNATRINNVHVDGVLAGERGIGGLVWKADNSKISNSSFKGRIVNSYETKAPYNIGGLVGQLTGINALVDKSKATITISSNADSTNQTVGGLAGLVEKDALISNSYAEGNINNVKRFGSVAGVAGYLWDRDSSEERHAGRLHNVLSDINVMNGNAISGYHYRGMRITDSYSNKDNRVYKVTLEKDEVVTKESLEERGTILDVSQIASKKSEINSLSAPKVETLLTSTNKESDFSKVKDYQASRALAYKNIEKLLPFYNKATIVKYGNLVKEDSTLYEKEILSAVMMKDNEVITDIASHKEAANKLLIHYKDHSSEKLDLTYQSDFSKLAEYRVGDTGLIYTPNQFLQNHSSIVNEVLPDLKAVDYQSEAIRNTLGISSGVSLTELYLEEQFAKTKENLANTLEKLLSADAVIASENQTINGYVVDKIKRNKEALLLGLTYLERWYNFNYGDVNVKDLVMYHMDFFGKGNVSPLDTIIELGKSGFNNLLAKNNVDAYNISLANNNATKDLFSTLANYREVFLPNKTNNQWFKEQTKAYIVEEKSAIDEVRVKQEQAGSKYSIGVYDRITSDTWKYRNMVLPLLTMPERSVFVISTISSLGFGAYDRYRNNEHRAGAELNKFVEDNAQETAKRQRDHYDYWYRILDEQGREKLYRNILVYDAYKFGDDTTVDKATVEAQFDSSNPAMKYFFGPVGNKVVHNKHGAYATGDSVYYMGYRMLDKDGAITYTHEMTHDSDNEIYLGGYGRRSGLGPEFFAKGLLQAPDHPDDATITVNSILKYDKNDASEKSRLQVLDPTKRFQNADDLKNYVHNMFDVIYMLEYLEGMSIVNRLSDVQKVNALRKIENKYVRDADGNDVYATNVIKNITMADAQKLNSFNSLIENDILSAREYKNGDVERNGYHTIKLFSPIYSALSSEKGTPGDLMGRRIAYELLAAKGFKDGMVPYISNQYEDDAKQNGKTISIYGKTRGLVTDDLVLRKVFNGQFNNWTEFKKAMYEERKNKFDSLNKVTFDDTRQPWTSYATKTISTVEELQTLMDEAVLQDANDNWYSWSGYKPEYNSAVHKLKKAVFKAYLDQTKDFRKSIFENQK</sequence>
<feature type="signal peptide" evidence="2">
    <location>
        <begin position="1"/>
        <end position="37"/>
    </location>
</feature>
<feature type="propeptide" id="PRO_0000026839" evidence="2">
    <location>
        <begin position="38"/>
        <end position="99"/>
    </location>
</feature>
<feature type="chain" id="PRO_0000026840" description="Immunoglobulin A1 protease">
    <location>
        <begin position="100"/>
        <end position="1854"/>
    </location>
</feature>
<feature type="transmembrane region" description="Helical" evidence="2">
    <location>
        <begin position="106"/>
        <end position="125"/>
    </location>
</feature>
<feature type="transmembrane region" description="Helical" evidence="2">
    <location>
        <begin position="132"/>
        <end position="154"/>
    </location>
</feature>
<feature type="topological domain" description="Extracellular" evidence="2">
    <location>
        <begin position="155"/>
        <end position="1854"/>
    </location>
</feature>
<feature type="domain" description="G5" evidence="3">
    <location>
        <begin position="256"/>
        <end position="335"/>
    </location>
</feature>
<feature type="repeat" description="1">
    <location>
        <begin position="349"/>
        <end position="368"/>
    </location>
</feature>
<feature type="repeat" description="2">
    <location>
        <begin position="369"/>
        <end position="388"/>
    </location>
</feature>
<feature type="repeat" description="3">
    <location>
        <begin position="389"/>
        <end position="406"/>
    </location>
</feature>
<feature type="repeat" description="4">
    <location>
        <begin position="407"/>
        <end position="426"/>
    </location>
</feature>
<feature type="repeat" description="5">
    <location>
        <begin position="427"/>
        <end position="446"/>
    </location>
</feature>
<feature type="repeat" description="6">
    <location>
        <begin position="447"/>
        <end position="466"/>
    </location>
</feature>
<feature type="repeat" description="7">
    <location>
        <begin position="467"/>
        <end position="486"/>
    </location>
</feature>
<feature type="repeat" description="8">
    <location>
        <begin position="487"/>
        <end position="506"/>
    </location>
</feature>
<feature type="repeat" description="9">
    <location>
        <begin position="507"/>
        <end position="526"/>
    </location>
</feature>
<feature type="repeat" description="10">
    <location>
        <begin position="527"/>
        <end position="546"/>
    </location>
</feature>
<feature type="region of interest" description="10 X 20 AA approximate tandem repeats">
    <location>
        <begin position="349"/>
        <end position="546"/>
    </location>
</feature>
<feature type="region of interest" description="Disordered" evidence="5">
    <location>
        <begin position="533"/>
        <end position="570"/>
    </location>
</feature>
<feature type="short sequence motif" description="LPXTG sorting signal" evidence="4">
    <location>
        <begin position="96"/>
        <end position="100"/>
    </location>
</feature>
<feature type="compositionally biased region" description="Low complexity" evidence="5">
    <location>
        <begin position="533"/>
        <end position="550"/>
    </location>
</feature>
<feature type="compositionally biased region" description="Basic and acidic residues" evidence="5">
    <location>
        <begin position="552"/>
        <end position="570"/>
    </location>
</feature>
<feature type="active site" evidence="7">
    <location>
        <position position="1495"/>
    </location>
</feature>
<feature type="binding site" evidence="7">
    <location>
        <position position="1494"/>
    </location>
    <ligand>
        <name>Zn(2+)</name>
        <dbReference type="ChEBI" id="CHEBI:29105"/>
    </ligand>
</feature>
<feature type="binding site" evidence="1">
    <location>
        <position position="1498"/>
    </location>
    <ligand>
        <name>Zn(2+)</name>
        <dbReference type="ChEBI" id="CHEBI:29105"/>
    </ligand>
</feature>
<feature type="binding site" evidence="1">
    <location>
        <position position="1518"/>
    </location>
    <ligand>
        <name>Zn(2+)</name>
        <dbReference type="ChEBI" id="CHEBI:29105"/>
    </ligand>
</feature>
<feature type="modified residue" description="Pentaglycyl murein peptidoglycan amidated threonine" evidence="4">
    <location>
        <position position="99"/>
    </location>
</feature>
<feature type="mutagenesis site" description="Loss of activity." evidence="6">
    <original>H</original>
    <variation>F</variation>
    <location>
        <position position="1494"/>
    </location>
</feature>
<feature type="mutagenesis site" description="Loss of activity." evidence="6">
    <original>E</original>
    <variation>K</variation>
    <location>
        <position position="1495"/>
    </location>
</feature>
<accession>Q59986</accession>
<proteinExistence type="evidence at protein level"/>